<comment type="function">
    <text evidence="1">This protein is located at the 30S-50S ribosomal subunit interface and may play a role in the structure and function of the aminoacyl-tRNA binding site.</text>
</comment>
<comment type="similarity">
    <text evidence="1">Belongs to the bacterial ribosomal protein bL19 family.</text>
</comment>
<dbReference type="EMBL" id="CP001161">
    <property type="protein sequence ID" value="ACL30751.1"/>
    <property type="molecule type" value="Genomic_DNA"/>
</dbReference>
<dbReference type="RefSeq" id="WP_009874354.1">
    <property type="nucleotide sequence ID" value="NC_011833.1"/>
</dbReference>
<dbReference type="SMR" id="B8D9I0"/>
<dbReference type="KEGG" id="bap:BUAP5A_390"/>
<dbReference type="HOGENOM" id="CLU_103507_2_2_6"/>
<dbReference type="OrthoDB" id="9803541at2"/>
<dbReference type="Proteomes" id="UP000006904">
    <property type="component" value="Chromosome"/>
</dbReference>
<dbReference type="GO" id="GO:0022625">
    <property type="term" value="C:cytosolic large ribosomal subunit"/>
    <property type="evidence" value="ECO:0007669"/>
    <property type="project" value="TreeGrafter"/>
</dbReference>
<dbReference type="GO" id="GO:0003735">
    <property type="term" value="F:structural constituent of ribosome"/>
    <property type="evidence" value="ECO:0007669"/>
    <property type="project" value="InterPro"/>
</dbReference>
<dbReference type="GO" id="GO:0006412">
    <property type="term" value="P:translation"/>
    <property type="evidence" value="ECO:0007669"/>
    <property type="project" value="UniProtKB-UniRule"/>
</dbReference>
<dbReference type="FunFam" id="2.30.30.790:FF:000001">
    <property type="entry name" value="50S ribosomal protein L19"/>
    <property type="match status" value="1"/>
</dbReference>
<dbReference type="Gene3D" id="2.30.30.790">
    <property type="match status" value="1"/>
</dbReference>
<dbReference type="HAMAP" id="MF_00402">
    <property type="entry name" value="Ribosomal_bL19"/>
    <property type="match status" value="1"/>
</dbReference>
<dbReference type="InterPro" id="IPR001857">
    <property type="entry name" value="Ribosomal_bL19"/>
</dbReference>
<dbReference type="InterPro" id="IPR018257">
    <property type="entry name" value="Ribosomal_bL19_CS"/>
</dbReference>
<dbReference type="InterPro" id="IPR038657">
    <property type="entry name" value="Ribosomal_bL19_sf"/>
</dbReference>
<dbReference type="InterPro" id="IPR008991">
    <property type="entry name" value="Translation_prot_SH3-like_sf"/>
</dbReference>
<dbReference type="NCBIfam" id="TIGR01024">
    <property type="entry name" value="rplS_bact"/>
    <property type="match status" value="1"/>
</dbReference>
<dbReference type="PANTHER" id="PTHR15680:SF9">
    <property type="entry name" value="LARGE RIBOSOMAL SUBUNIT PROTEIN BL19M"/>
    <property type="match status" value="1"/>
</dbReference>
<dbReference type="PANTHER" id="PTHR15680">
    <property type="entry name" value="RIBOSOMAL PROTEIN L19"/>
    <property type="match status" value="1"/>
</dbReference>
<dbReference type="Pfam" id="PF01245">
    <property type="entry name" value="Ribosomal_L19"/>
    <property type="match status" value="1"/>
</dbReference>
<dbReference type="PIRSF" id="PIRSF002191">
    <property type="entry name" value="Ribosomal_L19"/>
    <property type="match status" value="1"/>
</dbReference>
<dbReference type="PRINTS" id="PR00061">
    <property type="entry name" value="RIBOSOMALL19"/>
</dbReference>
<dbReference type="SUPFAM" id="SSF50104">
    <property type="entry name" value="Translation proteins SH3-like domain"/>
    <property type="match status" value="1"/>
</dbReference>
<dbReference type="PROSITE" id="PS01015">
    <property type="entry name" value="RIBOSOMAL_L19"/>
    <property type="match status" value="1"/>
</dbReference>
<feature type="chain" id="PRO_1000134559" description="Large ribosomal subunit protein bL19">
    <location>
        <begin position="1"/>
        <end position="115"/>
    </location>
</feature>
<proteinExistence type="inferred from homology"/>
<organism>
    <name type="scientific">Buchnera aphidicola subsp. Acyrthosiphon pisum (strain 5A)</name>
    <dbReference type="NCBI Taxonomy" id="563178"/>
    <lineage>
        <taxon>Bacteria</taxon>
        <taxon>Pseudomonadati</taxon>
        <taxon>Pseudomonadota</taxon>
        <taxon>Gammaproteobacteria</taxon>
        <taxon>Enterobacterales</taxon>
        <taxon>Erwiniaceae</taxon>
        <taxon>Buchnera</taxon>
    </lineage>
</organism>
<reference key="1">
    <citation type="journal article" date="2009" name="Science">
        <title>The dynamics and time scale of ongoing genomic erosion in symbiotic bacteria.</title>
        <authorList>
            <person name="Moran N.A."/>
            <person name="McLaughlin H.J."/>
            <person name="Sorek R."/>
        </authorList>
    </citation>
    <scope>NUCLEOTIDE SEQUENCE [LARGE SCALE GENOMIC DNA]</scope>
    <source>
        <strain>5A</strain>
    </source>
</reference>
<evidence type="ECO:0000255" key="1">
    <source>
        <dbReference type="HAMAP-Rule" id="MF_00402"/>
    </source>
</evidence>
<evidence type="ECO:0000305" key="2"/>
<protein>
    <recommendedName>
        <fullName evidence="1">Large ribosomal subunit protein bL19</fullName>
    </recommendedName>
    <alternativeName>
        <fullName evidence="2">50S ribosomal protein L19</fullName>
    </alternativeName>
</protein>
<keyword id="KW-0687">Ribonucleoprotein</keyword>
<keyword id="KW-0689">Ribosomal protein</keyword>
<accession>B8D9I0</accession>
<sequence length="115" mass="13355">MFSIIQKIEKEQIKKNIPIFRSGDTIEVKVWVIEGSKKRLQSFEGIVIAIKNRCLNSSFTVRKISNGEGVERVFQTHSHGIEEILVKRRGLVRKAKLYYLRTRTGKAARIKERLN</sequence>
<gene>
    <name evidence="1" type="primary">rplS</name>
    <name type="ordered locus">BUAP5A_390</name>
</gene>
<name>RL19_BUCA5</name>